<reference evidence="7" key="1">
    <citation type="submission" date="2006-10" db="EMBL/GenBank/DDBJ databases">
        <authorList>
            <consortium name="Sanger Xenopus tropicalis EST/cDNA project"/>
        </authorList>
    </citation>
    <scope>NUCLEOTIDE SEQUENCE [LARGE SCALE MRNA]</scope>
    <source>
        <tissue evidence="7">Gastrula</tissue>
    </source>
</reference>
<comment type="function">
    <text evidence="1">Receptor for the C-X-C chemokine cxcl12/sdf-1. Transduces a signal by increasing the intracellular calcium ion level. Signaling with cxcl12/sdf-1 mediates the directional movement of mesodermal cells during gastrulation. May play a role in the migration of embryonic presumptive primordial germ cells (pPGCs). May also be involved in regulating migration of hematopoietic stem cells into the larval liver (By similarity).</text>
</comment>
<comment type="subunit">
    <text evidence="2">Monomer. Can form dimers (By similarity).</text>
</comment>
<comment type="subcellular location">
    <subcellularLocation>
        <location evidence="4">Cell membrane</location>
        <topology evidence="4">Multi-pass membrane protein</topology>
    </subcellularLocation>
    <subcellularLocation>
        <location evidence="3 4">Cytoplasm</location>
    </subcellularLocation>
    <subcellularLocation>
        <location evidence="3 4">Nucleus</location>
    </subcellularLocation>
    <subcellularLocation>
        <location evidence="1">Early endosome</location>
    </subcellularLocation>
    <subcellularLocation>
        <location evidence="1">Late endosome</location>
    </subcellularLocation>
    <subcellularLocation>
        <location evidence="1">Lysosome</location>
    </subcellularLocation>
    <text evidence="3 4">Expressed in the cytoplasm of a small number of embryonic pPGCs from stage 24. Expressed in the nucleus of 3 lateral pPGCs (By similarity).</text>
</comment>
<comment type="PTM">
    <text evidence="2">Sulfation is required for efficient binding of cxcl12/sdf-1alpha and promotes its dimerization.</text>
</comment>
<comment type="PTM">
    <text evidence="2">O- and N-glycosylated.</text>
</comment>
<comment type="similarity">
    <text evidence="5">Belongs to the G-protein coupled receptor 1 family.</text>
</comment>
<dbReference type="EMBL" id="CR942369">
    <property type="protein sequence ID" value="CAL49334.1"/>
    <property type="molecule type" value="mRNA"/>
</dbReference>
<dbReference type="RefSeq" id="NP_001090831.1">
    <property type="nucleotide sequence ID" value="NM_001097362.1"/>
</dbReference>
<dbReference type="SMR" id="Q07FZ4"/>
<dbReference type="FunCoup" id="Q07FZ4">
    <property type="interactions" value="1321"/>
</dbReference>
<dbReference type="STRING" id="8364.ENSXETP00000047557"/>
<dbReference type="GlyCosmos" id="Q07FZ4">
    <property type="glycosylation" value="2 sites, No reported glycans"/>
</dbReference>
<dbReference type="PaxDb" id="8364-ENSXETP00000032559"/>
<dbReference type="GeneID" id="100038176"/>
<dbReference type="KEGG" id="xtr:100038176"/>
<dbReference type="AGR" id="Xenbase:XB-GENE-489917"/>
<dbReference type="CTD" id="7852"/>
<dbReference type="Xenbase" id="XB-GENE-489917">
    <property type="gene designation" value="cxcr4"/>
</dbReference>
<dbReference type="eggNOG" id="KOG3656">
    <property type="taxonomic scope" value="Eukaryota"/>
</dbReference>
<dbReference type="HOGENOM" id="CLU_009579_8_3_1"/>
<dbReference type="InParanoid" id="Q07FZ4"/>
<dbReference type="OMA" id="YVCQRFY"/>
<dbReference type="OrthoDB" id="8413490at2759"/>
<dbReference type="PhylomeDB" id="Q07FZ4"/>
<dbReference type="TreeFam" id="TF330966"/>
<dbReference type="Proteomes" id="UP000008143">
    <property type="component" value="Chromosome 9"/>
</dbReference>
<dbReference type="Bgee" id="ENSXETG00000014890">
    <property type="expression patterns" value="Expressed in neurula embryo and 13 other cell types or tissues"/>
</dbReference>
<dbReference type="GO" id="GO:0005769">
    <property type="term" value="C:early endosome"/>
    <property type="evidence" value="ECO:0000250"/>
    <property type="project" value="UniProtKB"/>
</dbReference>
<dbReference type="GO" id="GO:0005770">
    <property type="term" value="C:late endosome"/>
    <property type="evidence" value="ECO:0000250"/>
    <property type="project" value="UniProtKB"/>
</dbReference>
<dbReference type="GO" id="GO:0005764">
    <property type="term" value="C:lysosome"/>
    <property type="evidence" value="ECO:0000250"/>
    <property type="project" value="UniProtKB"/>
</dbReference>
<dbReference type="GO" id="GO:0005634">
    <property type="term" value="C:nucleus"/>
    <property type="evidence" value="ECO:0007669"/>
    <property type="project" value="UniProtKB-SubCell"/>
</dbReference>
<dbReference type="GO" id="GO:0005886">
    <property type="term" value="C:plasma membrane"/>
    <property type="evidence" value="ECO:0000250"/>
    <property type="project" value="UniProtKB"/>
</dbReference>
<dbReference type="GO" id="GO:0016494">
    <property type="term" value="F:C-X-C chemokine receptor activity"/>
    <property type="evidence" value="ECO:0000250"/>
    <property type="project" value="UniProtKB"/>
</dbReference>
<dbReference type="GO" id="GO:0019955">
    <property type="term" value="F:cytokine binding"/>
    <property type="evidence" value="ECO:0007669"/>
    <property type="project" value="InterPro"/>
</dbReference>
<dbReference type="GO" id="GO:0071345">
    <property type="term" value="P:cellular response to cytokine stimulus"/>
    <property type="evidence" value="ECO:0000250"/>
    <property type="project" value="UniProtKB"/>
</dbReference>
<dbReference type="GO" id="GO:0006935">
    <property type="term" value="P:chemotaxis"/>
    <property type="evidence" value="ECO:0007669"/>
    <property type="project" value="InterPro"/>
</dbReference>
<dbReference type="GO" id="GO:0060216">
    <property type="term" value="P:definitive hemopoiesis"/>
    <property type="evidence" value="ECO:0000250"/>
    <property type="project" value="UniProtKB"/>
</dbReference>
<dbReference type="GO" id="GO:0007186">
    <property type="term" value="P:G protein-coupled receptor signaling pathway"/>
    <property type="evidence" value="ECO:0000250"/>
    <property type="project" value="UniProtKB"/>
</dbReference>
<dbReference type="GO" id="GO:0008354">
    <property type="term" value="P:germ cell migration"/>
    <property type="evidence" value="ECO:0000250"/>
    <property type="project" value="UniProtKB"/>
</dbReference>
<dbReference type="GO" id="GO:0007509">
    <property type="term" value="P:mesoderm migration involved in gastrulation"/>
    <property type="evidence" value="ECO:0000250"/>
    <property type="project" value="UniProtKB"/>
</dbReference>
<dbReference type="CDD" id="cd15179">
    <property type="entry name" value="7tmA_CXCR4"/>
    <property type="match status" value="1"/>
</dbReference>
<dbReference type="FunFam" id="1.20.1070.10:FF:000063">
    <property type="entry name" value="C-X-C chemokine receptor type 4"/>
    <property type="match status" value="1"/>
</dbReference>
<dbReference type="Gene3D" id="1.20.1070.10">
    <property type="entry name" value="Rhodopsin 7-helix transmembrane proteins"/>
    <property type="match status" value="1"/>
</dbReference>
<dbReference type="InterPro" id="IPR050119">
    <property type="entry name" value="CCR1-9-like"/>
</dbReference>
<dbReference type="InterPro" id="IPR022726">
    <property type="entry name" value="Chemokine_CXCR4_N_dom"/>
</dbReference>
<dbReference type="InterPro" id="IPR000355">
    <property type="entry name" value="Chemokine_rcpt"/>
</dbReference>
<dbReference type="InterPro" id="IPR001277">
    <property type="entry name" value="CXCR4/ACKR2"/>
</dbReference>
<dbReference type="InterPro" id="IPR000276">
    <property type="entry name" value="GPCR_Rhodpsn"/>
</dbReference>
<dbReference type="InterPro" id="IPR017452">
    <property type="entry name" value="GPCR_Rhodpsn_7TM"/>
</dbReference>
<dbReference type="PANTHER" id="PTHR10489:SF594">
    <property type="entry name" value="C-X-C CHEMOKINE RECEPTOR TYPE 4"/>
    <property type="match status" value="1"/>
</dbReference>
<dbReference type="PANTHER" id="PTHR10489">
    <property type="entry name" value="CELL ADHESION MOLECULE"/>
    <property type="match status" value="1"/>
</dbReference>
<dbReference type="Pfam" id="PF00001">
    <property type="entry name" value="7tm_1"/>
    <property type="match status" value="1"/>
</dbReference>
<dbReference type="Pfam" id="PF12109">
    <property type="entry name" value="CXCR4_N"/>
    <property type="match status" value="1"/>
</dbReference>
<dbReference type="PRINTS" id="PR00657">
    <property type="entry name" value="CCCHEMOKINER"/>
</dbReference>
<dbReference type="PRINTS" id="PR00645">
    <property type="entry name" value="CXCCHMKINER4"/>
</dbReference>
<dbReference type="PRINTS" id="PR00237">
    <property type="entry name" value="GPCRRHODOPSN"/>
</dbReference>
<dbReference type="SUPFAM" id="SSF81321">
    <property type="entry name" value="Family A G protein-coupled receptor-like"/>
    <property type="match status" value="1"/>
</dbReference>
<dbReference type="PROSITE" id="PS00237">
    <property type="entry name" value="G_PROTEIN_RECEP_F1_1"/>
    <property type="match status" value="1"/>
</dbReference>
<dbReference type="PROSITE" id="PS50262">
    <property type="entry name" value="G_PROTEIN_RECEP_F1_2"/>
    <property type="match status" value="1"/>
</dbReference>
<organism>
    <name type="scientific">Xenopus tropicalis</name>
    <name type="common">Western clawed frog</name>
    <name type="synonym">Silurana tropicalis</name>
    <dbReference type="NCBI Taxonomy" id="8364"/>
    <lineage>
        <taxon>Eukaryota</taxon>
        <taxon>Metazoa</taxon>
        <taxon>Chordata</taxon>
        <taxon>Craniata</taxon>
        <taxon>Vertebrata</taxon>
        <taxon>Euteleostomi</taxon>
        <taxon>Amphibia</taxon>
        <taxon>Batrachia</taxon>
        <taxon>Anura</taxon>
        <taxon>Pipoidea</taxon>
        <taxon>Pipidae</taxon>
        <taxon>Xenopodinae</taxon>
        <taxon>Xenopus</taxon>
        <taxon>Silurana</taxon>
    </lineage>
</organism>
<gene>
    <name evidence="7" type="primary">cxcr4</name>
    <name type="ORF">TGas094c16.1</name>
</gene>
<feature type="chain" id="PRO_0000379454" description="C-X-C chemokine receptor type 4">
    <location>
        <begin position="1"/>
        <end position="358"/>
    </location>
</feature>
<feature type="topological domain" description="Extracellular" evidence="1">
    <location>
        <begin position="1"/>
        <end position="44"/>
    </location>
</feature>
<feature type="transmembrane region" description="Helical; Name=1" evidence="1">
    <location>
        <begin position="45"/>
        <end position="67"/>
    </location>
</feature>
<feature type="topological domain" description="Cytoplasmic" evidence="1">
    <location>
        <begin position="68"/>
        <end position="81"/>
    </location>
</feature>
<feature type="transmembrane region" description="Helical; Name=2" evidence="1">
    <location>
        <begin position="82"/>
        <end position="103"/>
    </location>
</feature>
<feature type="topological domain" description="Extracellular" evidence="1">
    <location>
        <begin position="104"/>
        <end position="114"/>
    </location>
</feature>
<feature type="transmembrane region" description="Helical; Name=3" evidence="1">
    <location>
        <begin position="115"/>
        <end position="134"/>
    </location>
</feature>
<feature type="topological domain" description="Cytoplasmic" evidence="1">
    <location>
        <begin position="135"/>
        <end position="158"/>
    </location>
</feature>
<feature type="transmembrane region" description="Helical; Name=4" evidence="1">
    <location>
        <begin position="159"/>
        <end position="178"/>
    </location>
</feature>
<feature type="topological domain" description="Extracellular" evidence="1">
    <location>
        <begin position="179"/>
        <end position="202"/>
    </location>
</feature>
<feature type="transmembrane region" description="Helical; Name=5" evidence="1">
    <location>
        <begin position="203"/>
        <end position="223"/>
    </location>
</feature>
<feature type="topological domain" description="Cytoplasmic" evidence="1">
    <location>
        <begin position="224"/>
        <end position="248"/>
    </location>
</feature>
<feature type="transmembrane region" description="Helical; Name=6" evidence="1">
    <location>
        <begin position="249"/>
        <end position="268"/>
    </location>
</feature>
<feature type="topological domain" description="Extracellular" evidence="1">
    <location>
        <begin position="269"/>
        <end position="289"/>
    </location>
</feature>
<feature type="transmembrane region" description="Helical; Name=7" evidence="1">
    <location>
        <begin position="290"/>
        <end position="309"/>
    </location>
</feature>
<feature type="topological domain" description="Cytoplasmic" evidence="1">
    <location>
        <begin position="310"/>
        <end position="358"/>
    </location>
</feature>
<feature type="region of interest" description="Important for chemokine binding and signaling" evidence="1">
    <location>
        <begin position="1"/>
        <end position="25"/>
    </location>
</feature>
<feature type="region of interest" description="Chemokine binding" evidence="1">
    <location>
        <begin position="98"/>
        <end position="101"/>
    </location>
</feature>
<feature type="region of interest" description="Chemokine binding" evidence="1">
    <location>
        <begin position="117"/>
        <end position="121"/>
    </location>
</feature>
<feature type="region of interest" description="Involved in dimerization; when bound to chemokine" evidence="1">
    <location>
        <begin position="139"/>
        <end position="151"/>
    </location>
</feature>
<feature type="region of interest" description="Chemokine binding, important for signaling" evidence="1">
    <location>
        <begin position="190"/>
        <end position="194"/>
    </location>
</feature>
<feature type="region of interest" description="Disordered" evidence="6">
    <location>
        <begin position="338"/>
        <end position="358"/>
    </location>
</feature>
<feature type="compositionally biased region" description="Low complexity" evidence="6">
    <location>
        <begin position="344"/>
        <end position="358"/>
    </location>
</feature>
<feature type="site" description="Chemokine binding" evidence="1">
    <location>
        <position position="175"/>
    </location>
</feature>
<feature type="site" description="Chemokine binding" evidence="1">
    <location>
        <position position="295"/>
    </location>
</feature>
<feature type="glycosylation site" description="N-linked (GlcNAc...) asparagine" evidence="4">
    <location>
        <position position="16"/>
    </location>
</feature>
<feature type="glycosylation site" description="N-linked (GlcNAc...) asparagine" evidence="4">
    <location>
        <position position="20"/>
    </location>
</feature>
<feature type="disulfide bond" evidence="5">
    <location>
        <begin position="32"/>
        <end position="281"/>
    </location>
</feature>
<feature type="disulfide bond" evidence="5">
    <location>
        <begin position="113"/>
        <end position="190"/>
    </location>
</feature>
<evidence type="ECO:0000250" key="1"/>
<evidence type="ECO:0000250" key="2">
    <source>
        <dbReference type="UniProtKB" id="P61073"/>
    </source>
</evidence>
<evidence type="ECO:0000250" key="3">
    <source>
        <dbReference type="UniProtKB" id="Q9YGC3"/>
    </source>
</evidence>
<evidence type="ECO:0000255" key="4"/>
<evidence type="ECO:0000255" key="5">
    <source>
        <dbReference type="PROSITE-ProRule" id="PRU00521"/>
    </source>
</evidence>
<evidence type="ECO:0000256" key="6">
    <source>
        <dbReference type="SAM" id="MobiDB-lite"/>
    </source>
</evidence>
<evidence type="ECO:0000312" key="7">
    <source>
        <dbReference type="EMBL" id="CAL49334.1"/>
    </source>
</evidence>
<accession>Q07FZ4</accession>
<name>CXCR4_XENTR</name>
<keyword id="KW-1003">Cell membrane</keyword>
<keyword id="KW-0963">Cytoplasm</keyword>
<keyword id="KW-0217">Developmental protein</keyword>
<keyword id="KW-1015">Disulfide bond</keyword>
<keyword id="KW-0967">Endosome</keyword>
<keyword id="KW-0297">G-protein coupled receptor</keyword>
<keyword id="KW-0306">Gastrulation</keyword>
<keyword id="KW-0325">Glycoprotein</keyword>
<keyword id="KW-0458">Lysosome</keyword>
<keyword id="KW-0472">Membrane</keyword>
<keyword id="KW-0539">Nucleus</keyword>
<keyword id="KW-0675">Receptor</keyword>
<keyword id="KW-1185">Reference proteome</keyword>
<keyword id="KW-0765">Sulfation</keyword>
<keyword id="KW-0807">Transducer</keyword>
<keyword id="KW-0812">Transmembrane</keyword>
<keyword id="KW-1133">Transmembrane helix</keyword>
<sequence>MDGFSGGIDINIFDSNSTENGSGDFEDFSEPCFMHDNSDFNRIFLPTIYSFIFLLGIIGNGLVVVVMGYQKKSRTMTDKYRLHLSVADLLFVFTLPFWSVDAAIGWYFKEFLCKAVHVIYTVNLYSSVLILAFISLDRYLAIVHATNSQGSRKMLADKVVYAGVWLPALLLTVPDLVFARVSDENGQFVCDRIYPIDNRETWTVGFRFLHITVGLILPGLIILICYCVIISKLSHSKGHQKRKALKTTVILILAFFACWLPYYVCLTTDTFMLLGLLKADCIWENTLHKAISITEALAFFHCCLNPILYAFLGAKFKTSAQNAFTSVSRGSSLKILSKKRAGLSSVSTESESSSFHSS</sequence>
<protein>
    <recommendedName>
        <fullName evidence="2 7">C-X-C chemokine receptor type 4</fullName>
        <shortName evidence="2">CXC-R4</shortName>
        <shortName evidence="2">CXCR-4</shortName>
    </recommendedName>
    <alternativeName>
        <fullName evidence="2">Stromal cell-derived factor 1 receptor</fullName>
        <shortName evidence="2">SDF-1 receptor</shortName>
    </alternativeName>
</protein>
<proteinExistence type="evidence at transcript level"/>